<name>ISCA_KLEP7</name>
<gene>
    <name evidence="1" type="primary">iscA</name>
    <name type="ordered locus">KPN78578_28090</name>
    <name type="ORF">KPN_02860</name>
</gene>
<dbReference type="EMBL" id="CP000647">
    <property type="protein sequence ID" value="ABR78270.1"/>
    <property type="molecule type" value="Genomic_DNA"/>
</dbReference>
<dbReference type="RefSeq" id="WP_002913979.1">
    <property type="nucleotide sequence ID" value="NC_009648.1"/>
</dbReference>
<dbReference type="SMR" id="A6TCE9"/>
<dbReference type="STRING" id="272620.KPN_02860"/>
<dbReference type="PaxDb" id="272620-KPN_02860"/>
<dbReference type="EnsemblBacteria" id="ABR78270">
    <property type="protein sequence ID" value="ABR78270"/>
    <property type="gene ID" value="KPN_02860"/>
</dbReference>
<dbReference type="GeneID" id="97394095"/>
<dbReference type="KEGG" id="kpn:KPN_02860"/>
<dbReference type="HOGENOM" id="CLU_069054_5_1_6"/>
<dbReference type="Proteomes" id="UP000000265">
    <property type="component" value="Chromosome"/>
</dbReference>
<dbReference type="GO" id="GO:0005829">
    <property type="term" value="C:cytosol"/>
    <property type="evidence" value="ECO:0007669"/>
    <property type="project" value="TreeGrafter"/>
</dbReference>
<dbReference type="GO" id="GO:0051537">
    <property type="term" value="F:2 iron, 2 sulfur cluster binding"/>
    <property type="evidence" value="ECO:0007669"/>
    <property type="project" value="TreeGrafter"/>
</dbReference>
<dbReference type="GO" id="GO:0005506">
    <property type="term" value="F:iron ion binding"/>
    <property type="evidence" value="ECO:0007669"/>
    <property type="project" value="UniProtKB-UniRule"/>
</dbReference>
<dbReference type="GO" id="GO:0016226">
    <property type="term" value="P:iron-sulfur cluster assembly"/>
    <property type="evidence" value="ECO:0007669"/>
    <property type="project" value="UniProtKB-UniRule"/>
</dbReference>
<dbReference type="FunFam" id="2.60.300.12:FF:000001">
    <property type="entry name" value="Iron-binding protein IscA"/>
    <property type="match status" value="1"/>
</dbReference>
<dbReference type="Gene3D" id="2.60.300.12">
    <property type="entry name" value="HesB-like domain"/>
    <property type="match status" value="1"/>
</dbReference>
<dbReference type="HAMAP" id="MF_01429">
    <property type="entry name" value="Fe_S_insert_IscA"/>
    <property type="match status" value="1"/>
</dbReference>
<dbReference type="InterPro" id="IPR050322">
    <property type="entry name" value="Fe-S_cluster_asmbl/transfer"/>
</dbReference>
<dbReference type="InterPro" id="IPR000361">
    <property type="entry name" value="FeS_biogenesis"/>
</dbReference>
<dbReference type="InterPro" id="IPR016092">
    <property type="entry name" value="FeS_cluster_insertion"/>
</dbReference>
<dbReference type="InterPro" id="IPR017870">
    <property type="entry name" value="FeS_cluster_insertion_CS"/>
</dbReference>
<dbReference type="InterPro" id="IPR035903">
    <property type="entry name" value="HesB-like_dom_sf"/>
</dbReference>
<dbReference type="InterPro" id="IPR011302">
    <property type="entry name" value="IscA_proteobacteria"/>
</dbReference>
<dbReference type="NCBIfam" id="TIGR00049">
    <property type="entry name" value="iron-sulfur cluster assembly accessory protein"/>
    <property type="match status" value="1"/>
</dbReference>
<dbReference type="NCBIfam" id="TIGR02011">
    <property type="entry name" value="IscA"/>
    <property type="match status" value="1"/>
</dbReference>
<dbReference type="NCBIfam" id="NF007049">
    <property type="entry name" value="PRK09502.1"/>
    <property type="match status" value="1"/>
</dbReference>
<dbReference type="PANTHER" id="PTHR10072:SF41">
    <property type="entry name" value="IRON-SULFUR CLUSTER ASSEMBLY 1 HOMOLOG, MITOCHONDRIAL"/>
    <property type="match status" value="1"/>
</dbReference>
<dbReference type="PANTHER" id="PTHR10072">
    <property type="entry name" value="IRON-SULFUR CLUSTER ASSEMBLY PROTEIN"/>
    <property type="match status" value="1"/>
</dbReference>
<dbReference type="Pfam" id="PF01521">
    <property type="entry name" value="Fe-S_biosyn"/>
    <property type="match status" value="1"/>
</dbReference>
<dbReference type="SUPFAM" id="SSF89360">
    <property type="entry name" value="HesB-like domain"/>
    <property type="match status" value="1"/>
</dbReference>
<dbReference type="PROSITE" id="PS01152">
    <property type="entry name" value="HESB"/>
    <property type="match status" value="1"/>
</dbReference>
<organism>
    <name type="scientific">Klebsiella pneumoniae subsp. pneumoniae (strain ATCC 700721 / MGH 78578)</name>
    <dbReference type="NCBI Taxonomy" id="272620"/>
    <lineage>
        <taxon>Bacteria</taxon>
        <taxon>Pseudomonadati</taxon>
        <taxon>Pseudomonadota</taxon>
        <taxon>Gammaproteobacteria</taxon>
        <taxon>Enterobacterales</taxon>
        <taxon>Enterobacteriaceae</taxon>
        <taxon>Klebsiella/Raoultella group</taxon>
        <taxon>Klebsiella</taxon>
        <taxon>Klebsiella pneumoniae complex</taxon>
    </lineage>
</organism>
<protein>
    <recommendedName>
        <fullName evidence="1">Iron-binding protein IscA</fullName>
    </recommendedName>
    <alternativeName>
        <fullName evidence="1">Iron-sulfur cluster assembly protein</fullName>
    </alternativeName>
</protein>
<evidence type="ECO:0000255" key="1">
    <source>
        <dbReference type="HAMAP-Rule" id="MF_01429"/>
    </source>
</evidence>
<reference key="1">
    <citation type="submission" date="2006-09" db="EMBL/GenBank/DDBJ databases">
        <authorList>
            <consortium name="The Klebsiella pneumonia Genome Sequencing Project"/>
            <person name="McClelland M."/>
            <person name="Sanderson E.K."/>
            <person name="Spieth J."/>
            <person name="Clifton W.S."/>
            <person name="Latreille P."/>
            <person name="Sabo A."/>
            <person name="Pepin K."/>
            <person name="Bhonagiri V."/>
            <person name="Porwollik S."/>
            <person name="Ali J."/>
            <person name="Wilson R.K."/>
        </authorList>
    </citation>
    <scope>NUCLEOTIDE SEQUENCE [LARGE SCALE GENOMIC DNA]</scope>
    <source>
        <strain>ATCC 700721 / MGH 78578</strain>
    </source>
</reference>
<comment type="function">
    <text evidence="1">Is able to transfer iron-sulfur clusters to apo-ferredoxin. Multiple cycles of [2Fe2S] cluster formation and transfer are observed, suggesting that IscA acts catalytically. Recruits intracellular free iron so as to provide iron for the assembly of transient iron-sulfur cluster in IscU in the presence of IscS, L-cysteine and the thioredoxin reductase system TrxA/TrxB.</text>
</comment>
<comment type="cofactor">
    <cofactor evidence="1">
        <name>Fe cation</name>
        <dbReference type="ChEBI" id="CHEBI:24875"/>
    </cofactor>
    <text evidence="1">Binds 2 iron ions per dimer. The dimer may bind additional iron ions.</text>
</comment>
<comment type="subunit">
    <text evidence="1">Homodimer; may form tetramers and higher multimers.</text>
</comment>
<comment type="similarity">
    <text evidence="1">Belongs to the HesB/IscA family.</text>
</comment>
<proteinExistence type="inferred from homology"/>
<keyword id="KW-0408">Iron</keyword>
<keyword id="KW-0479">Metal-binding</keyword>
<feature type="chain" id="PRO_1000024375" description="Iron-binding protein IscA">
    <location>
        <begin position="1"/>
        <end position="107"/>
    </location>
</feature>
<feature type="binding site" evidence="1">
    <location>
        <position position="35"/>
    </location>
    <ligand>
        <name>Fe cation</name>
        <dbReference type="ChEBI" id="CHEBI:24875"/>
    </ligand>
</feature>
<feature type="binding site" evidence="1">
    <location>
        <position position="99"/>
    </location>
    <ligand>
        <name>Fe cation</name>
        <dbReference type="ChEBI" id="CHEBI:24875"/>
    </ligand>
</feature>
<feature type="binding site" evidence="1">
    <location>
        <position position="101"/>
    </location>
    <ligand>
        <name>Fe cation</name>
        <dbReference type="ChEBI" id="CHEBI:24875"/>
    </ligand>
</feature>
<sequence length="107" mass="11449">MSITLSDSAAARVNAFLANRGKGFGLRLGVRTSGCSGMAYVLEFVDEPAAEDTVFEDKGVKVVIDGKSLQFLDGTQLDFVKEGLNEGFKFTNPNVKDECGCGESFNV</sequence>
<accession>A6TCE9</accession>